<accession>Q9F7L6</accession>
<organism>
    <name type="scientific">Gamma-proteobacterium EBAC31A08</name>
    <dbReference type="NCBI Taxonomy" id="133804"/>
    <lineage>
        <taxon>Bacteria</taxon>
        <taxon>Pseudomonadati</taxon>
        <taxon>Pseudomonadota</taxon>
        <taxon>Gammaproteobacteria</taxon>
        <taxon>environmental samples</taxon>
    </lineage>
</organism>
<comment type="function">
    <text evidence="1">Involved in the biosynthesis of branched-chain amino acids (BCAA). Catalyzes an alkyl-migration followed by a ketol-acid reduction of (S)-2-acetolactate (S2AL) to yield (R)-2,3-dihydroxy-isovalerate. In the isomerase reaction, S2AL is rearranged via a Mg-dependent methyl migration to produce 3-hydroxy-3-methyl-2-ketobutyrate (HMKB). In the reductase reaction, this 2-ketoacid undergoes a metal-dependent reduction by NADPH to yield (R)-2,3-dihydroxy-isovalerate.</text>
</comment>
<comment type="catalytic activity">
    <reaction evidence="1">
        <text>(2R)-2,3-dihydroxy-3-methylbutanoate + NADP(+) = (2S)-2-acetolactate + NADPH + H(+)</text>
        <dbReference type="Rhea" id="RHEA:22068"/>
        <dbReference type="ChEBI" id="CHEBI:15378"/>
        <dbReference type="ChEBI" id="CHEBI:49072"/>
        <dbReference type="ChEBI" id="CHEBI:57783"/>
        <dbReference type="ChEBI" id="CHEBI:58349"/>
        <dbReference type="ChEBI" id="CHEBI:58476"/>
        <dbReference type="EC" id="1.1.1.86"/>
    </reaction>
</comment>
<comment type="catalytic activity">
    <reaction evidence="1">
        <text>(2R,3R)-2,3-dihydroxy-3-methylpentanoate + NADP(+) = (S)-2-ethyl-2-hydroxy-3-oxobutanoate + NADPH + H(+)</text>
        <dbReference type="Rhea" id="RHEA:13493"/>
        <dbReference type="ChEBI" id="CHEBI:15378"/>
        <dbReference type="ChEBI" id="CHEBI:49256"/>
        <dbReference type="ChEBI" id="CHEBI:49258"/>
        <dbReference type="ChEBI" id="CHEBI:57783"/>
        <dbReference type="ChEBI" id="CHEBI:58349"/>
        <dbReference type="EC" id="1.1.1.86"/>
    </reaction>
</comment>
<comment type="cofactor">
    <cofactor evidence="1">
        <name>Mg(2+)</name>
        <dbReference type="ChEBI" id="CHEBI:18420"/>
    </cofactor>
    <text evidence="1">Binds 2 magnesium ions per subunit.</text>
</comment>
<comment type="pathway">
    <text evidence="1">Amino-acid biosynthesis; L-isoleucine biosynthesis; L-isoleucine from 2-oxobutanoate: step 2/4.</text>
</comment>
<comment type="pathway">
    <text evidence="1">Amino-acid biosynthesis; L-valine biosynthesis; L-valine from pyruvate: step 2/4.</text>
</comment>
<comment type="similarity">
    <text evidence="1">Belongs to the ketol-acid reductoisomerase family.</text>
</comment>
<evidence type="ECO:0000255" key="1">
    <source>
        <dbReference type="HAMAP-Rule" id="MF_00435"/>
    </source>
</evidence>
<evidence type="ECO:0000255" key="2">
    <source>
        <dbReference type="PROSITE-ProRule" id="PRU01197"/>
    </source>
</evidence>
<evidence type="ECO:0000255" key="3">
    <source>
        <dbReference type="PROSITE-ProRule" id="PRU01198"/>
    </source>
</evidence>
<name>ILVC_PRB01</name>
<keyword id="KW-0028">Amino-acid biosynthesis</keyword>
<keyword id="KW-0100">Branched-chain amino acid biosynthesis</keyword>
<keyword id="KW-0460">Magnesium</keyword>
<keyword id="KW-0479">Metal-binding</keyword>
<keyword id="KW-0521">NADP</keyword>
<keyword id="KW-0560">Oxidoreductase</keyword>
<dbReference type="EC" id="1.1.1.86" evidence="1"/>
<dbReference type="EMBL" id="AF279106">
    <property type="protein sequence ID" value="AAG10503.1"/>
    <property type="molecule type" value="Genomic_DNA"/>
</dbReference>
<dbReference type="SMR" id="Q9F7L6"/>
<dbReference type="UniPathway" id="UPA00047">
    <property type="reaction ID" value="UER00056"/>
</dbReference>
<dbReference type="UniPathway" id="UPA00049">
    <property type="reaction ID" value="UER00060"/>
</dbReference>
<dbReference type="GO" id="GO:0005829">
    <property type="term" value="C:cytosol"/>
    <property type="evidence" value="ECO:0007669"/>
    <property type="project" value="TreeGrafter"/>
</dbReference>
<dbReference type="GO" id="GO:0004455">
    <property type="term" value="F:ketol-acid reductoisomerase activity"/>
    <property type="evidence" value="ECO:0007669"/>
    <property type="project" value="UniProtKB-UniRule"/>
</dbReference>
<dbReference type="GO" id="GO:0000287">
    <property type="term" value="F:magnesium ion binding"/>
    <property type="evidence" value="ECO:0007669"/>
    <property type="project" value="UniProtKB-UniRule"/>
</dbReference>
<dbReference type="GO" id="GO:0050661">
    <property type="term" value="F:NADP binding"/>
    <property type="evidence" value="ECO:0007669"/>
    <property type="project" value="InterPro"/>
</dbReference>
<dbReference type="GO" id="GO:0009097">
    <property type="term" value="P:isoleucine biosynthetic process"/>
    <property type="evidence" value="ECO:0007669"/>
    <property type="project" value="UniProtKB-UniRule"/>
</dbReference>
<dbReference type="GO" id="GO:0009099">
    <property type="term" value="P:L-valine biosynthetic process"/>
    <property type="evidence" value="ECO:0007669"/>
    <property type="project" value="UniProtKB-UniRule"/>
</dbReference>
<dbReference type="FunFam" id="3.40.50.720:FF:000023">
    <property type="entry name" value="Ketol-acid reductoisomerase (NADP(+))"/>
    <property type="match status" value="1"/>
</dbReference>
<dbReference type="Gene3D" id="6.10.240.10">
    <property type="match status" value="1"/>
</dbReference>
<dbReference type="Gene3D" id="3.40.50.720">
    <property type="entry name" value="NAD(P)-binding Rossmann-like Domain"/>
    <property type="match status" value="1"/>
</dbReference>
<dbReference type="HAMAP" id="MF_00435">
    <property type="entry name" value="IlvC"/>
    <property type="match status" value="1"/>
</dbReference>
<dbReference type="InterPro" id="IPR008927">
    <property type="entry name" value="6-PGluconate_DH-like_C_sf"/>
</dbReference>
<dbReference type="InterPro" id="IPR013023">
    <property type="entry name" value="KARI"/>
</dbReference>
<dbReference type="InterPro" id="IPR000506">
    <property type="entry name" value="KARI_C"/>
</dbReference>
<dbReference type="InterPro" id="IPR013116">
    <property type="entry name" value="KARI_N"/>
</dbReference>
<dbReference type="InterPro" id="IPR014359">
    <property type="entry name" value="KARI_prok"/>
</dbReference>
<dbReference type="InterPro" id="IPR036291">
    <property type="entry name" value="NAD(P)-bd_dom_sf"/>
</dbReference>
<dbReference type="NCBIfam" id="TIGR00465">
    <property type="entry name" value="ilvC"/>
    <property type="match status" value="1"/>
</dbReference>
<dbReference type="NCBIfam" id="NF004017">
    <property type="entry name" value="PRK05479.1"/>
    <property type="match status" value="1"/>
</dbReference>
<dbReference type="PANTHER" id="PTHR21371">
    <property type="entry name" value="KETOL-ACID REDUCTOISOMERASE, MITOCHONDRIAL"/>
    <property type="match status" value="1"/>
</dbReference>
<dbReference type="PANTHER" id="PTHR21371:SF1">
    <property type="entry name" value="KETOL-ACID REDUCTOISOMERASE, MITOCHONDRIAL"/>
    <property type="match status" value="1"/>
</dbReference>
<dbReference type="Pfam" id="PF01450">
    <property type="entry name" value="KARI_C"/>
    <property type="match status" value="1"/>
</dbReference>
<dbReference type="Pfam" id="PF07991">
    <property type="entry name" value="KARI_N"/>
    <property type="match status" value="1"/>
</dbReference>
<dbReference type="PIRSF" id="PIRSF000116">
    <property type="entry name" value="IlvC_gammaproteo"/>
    <property type="match status" value="1"/>
</dbReference>
<dbReference type="SUPFAM" id="SSF48179">
    <property type="entry name" value="6-phosphogluconate dehydrogenase C-terminal domain-like"/>
    <property type="match status" value="1"/>
</dbReference>
<dbReference type="SUPFAM" id="SSF51735">
    <property type="entry name" value="NAD(P)-binding Rossmann-fold domains"/>
    <property type="match status" value="1"/>
</dbReference>
<dbReference type="PROSITE" id="PS51851">
    <property type="entry name" value="KARI_C"/>
    <property type="match status" value="1"/>
</dbReference>
<dbReference type="PROSITE" id="PS51850">
    <property type="entry name" value="KARI_N"/>
    <property type="match status" value="1"/>
</dbReference>
<reference key="1">
    <citation type="journal article" date="2000" name="Science">
        <title>Bacterial rhodopsin: evidence for a new type of phototrophy in the sea.</title>
        <authorList>
            <person name="Beja O."/>
            <person name="Aravind L."/>
            <person name="Koonin E.V."/>
            <person name="Suzuki M.T."/>
            <person name="Hadd A."/>
            <person name="Nguyen L.P."/>
            <person name="Jovanovich S.B."/>
            <person name="Gates C.M."/>
            <person name="Feldman R.A."/>
            <person name="Spudich J.L."/>
            <person name="Spudich E.N."/>
            <person name="DeLong E.F."/>
        </authorList>
    </citation>
    <scope>NUCLEOTIDE SEQUENCE [GENOMIC DNA]</scope>
</reference>
<sequence length="347" mass="37483">MKIYYDEDANIEIIKGMNVSIIGYGSQGNAHANNLHESGVSVTVGLREGSSSWAKAEEAGLKVQTVADSVIQADLVMILAPDEFQKNIYETEIKPNLKTSAILAFAHGFNIHFEKIVPEATNSVIMIAPKGPGHTVRSTYTNGGGVPSLIAIYEDALSDEDYSAKDVALSYAKANGGTRAGVLETSFKEETETDLFGEQAVLCGGLTALIKAGFETLVEAGYSEEMAYFECLHETKLITDLIQEGGIANMHYSISNTAEYGDYVSGPKVITSDTKKAMKGILENIQSGKFADDFLNDCRQSNDGTGGPVMKSNREATKIHPIESVGAELRSKMKFLNSQKLVDKEIN</sequence>
<feature type="chain" id="PRO_0000151338" description="Ketol-acid reductoisomerase (NADP(+))">
    <location>
        <begin position="1"/>
        <end position="347"/>
    </location>
</feature>
<feature type="domain" description="KARI N-terminal Rossmann" evidence="2">
    <location>
        <begin position="1"/>
        <end position="185"/>
    </location>
</feature>
<feature type="domain" description="KARI C-terminal knotted" evidence="3">
    <location>
        <begin position="186"/>
        <end position="336"/>
    </location>
</feature>
<feature type="active site" evidence="1">
    <location>
        <position position="107"/>
    </location>
</feature>
<feature type="binding site" evidence="1">
    <location>
        <begin position="24"/>
        <end position="27"/>
    </location>
    <ligand>
        <name>NADP(+)</name>
        <dbReference type="ChEBI" id="CHEBI:58349"/>
    </ligand>
</feature>
<feature type="binding site" evidence="1">
    <location>
        <position position="47"/>
    </location>
    <ligand>
        <name>NADP(+)</name>
        <dbReference type="ChEBI" id="CHEBI:58349"/>
    </ligand>
</feature>
<feature type="binding site" evidence="1">
    <location>
        <position position="50"/>
    </location>
    <ligand>
        <name>NADP(+)</name>
        <dbReference type="ChEBI" id="CHEBI:58349"/>
    </ligand>
</feature>
<feature type="binding site" evidence="1">
    <location>
        <position position="52"/>
    </location>
    <ligand>
        <name>NADP(+)</name>
        <dbReference type="ChEBI" id="CHEBI:58349"/>
    </ligand>
</feature>
<feature type="binding site" evidence="1">
    <location>
        <begin position="82"/>
        <end position="85"/>
    </location>
    <ligand>
        <name>NADP(+)</name>
        <dbReference type="ChEBI" id="CHEBI:58349"/>
    </ligand>
</feature>
<feature type="binding site" evidence="1">
    <location>
        <position position="133"/>
    </location>
    <ligand>
        <name>NADP(+)</name>
        <dbReference type="ChEBI" id="CHEBI:58349"/>
    </ligand>
</feature>
<feature type="binding site" evidence="1">
    <location>
        <position position="194"/>
    </location>
    <ligand>
        <name>Mg(2+)</name>
        <dbReference type="ChEBI" id="CHEBI:18420"/>
        <label>1</label>
    </ligand>
</feature>
<feature type="binding site" evidence="1">
    <location>
        <position position="194"/>
    </location>
    <ligand>
        <name>Mg(2+)</name>
        <dbReference type="ChEBI" id="CHEBI:18420"/>
        <label>2</label>
    </ligand>
</feature>
<feature type="binding site" evidence="1">
    <location>
        <position position="198"/>
    </location>
    <ligand>
        <name>Mg(2+)</name>
        <dbReference type="ChEBI" id="CHEBI:18420"/>
        <label>1</label>
    </ligand>
</feature>
<feature type="binding site" evidence="1">
    <location>
        <position position="230"/>
    </location>
    <ligand>
        <name>Mg(2+)</name>
        <dbReference type="ChEBI" id="CHEBI:18420"/>
        <label>2</label>
    </ligand>
</feature>
<feature type="binding site" evidence="1">
    <location>
        <position position="234"/>
    </location>
    <ligand>
        <name>Mg(2+)</name>
        <dbReference type="ChEBI" id="CHEBI:18420"/>
        <label>2</label>
    </ligand>
</feature>
<feature type="binding site" evidence="1">
    <location>
        <position position="255"/>
    </location>
    <ligand>
        <name>substrate</name>
    </ligand>
</feature>
<proteinExistence type="inferred from homology"/>
<protein>
    <recommendedName>
        <fullName evidence="1">Ketol-acid reductoisomerase (NADP(+))</fullName>
        <shortName evidence="1">KARI</shortName>
        <ecNumber evidence="1">1.1.1.86</ecNumber>
    </recommendedName>
    <alternativeName>
        <fullName evidence="1">Acetohydroxy-acid isomeroreductase</fullName>
        <shortName evidence="1">AHIR</shortName>
    </alternativeName>
    <alternativeName>
        <fullName evidence="1">Alpha-keto-beta-hydroxylacyl reductoisomerase</fullName>
    </alternativeName>
    <alternativeName>
        <fullName evidence="1">Ketol-acid reductoisomerase type 1</fullName>
    </alternativeName>
    <alternativeName>
        <fullName evidence="1">Ketol-acid reductoisomerase type I</fullName>
    </alternativeName>
</protein>
<gene>
    <name evidence="1" type="primary">ilvC</name>
</gene>